<comment type="function">
    <text evidence="1">Catalyzes the conversion of 4-hydroxy-tetrahydrodipicolinate (HTPA) to tetrahydrodipicolinate.</text>
</comment>
<comment type="catalytic activity">
    <reaction evidence="1">
        <text>(S)-2,3,4,5-tetrahydrodipicolinate + NAD(+) + H2O = (2S,4S)-4-hydroxy-2,3,4,5-tetrahydrodipicolinate + NADH + H(+)</text>
        <dbReference type="Rhea" id="RHEA:35323"/>
        <dbReference type="ChEBI" id="CHEBI:15377"/>
        <dbReference type="ChEBI" id="CHEBI:15378"/>
        <dbReference type="ChEBI" id="CHEBI:16845"/>
        <dbReference type="ChEBI" id="CHEBI:57540"/>
        <dbReference type="ChEBI" id="CHEBI:57945"/>
        <dbReference type="ChEBI" id="CHEBI:67139"/>
        <dbReference type="EC" id="1.17.1.8"/>
    </reaction>
</comment>
<comment type="catalytic activity">
    <reaction evidence="1">
        <text>(S)-2,3,4,5-tetrahydrodipicolinate + NADP(+) + H2O = (2S,4S)-4-hydroxy-2,3,4,5-tetrahydrodipicolinate + NADPH + H(+)</text>
        <dbReference type="Rhea" id="RHEA:35331"/>
        <dbReference type="ChEBI" id="CHEBI:15377"/>
        <dbReference type="ChEBI" id="CHEBI:15378"/>
        <dbReference type="ChEBI" id="CHEBI:16845"/>
        <dbReference type="ChEBI" id="CHEBI:57783"/>
        <dbReference type="ChEBI" id="CHEBI:58349"/>
        <dbReference type="ChEBI" id="CHEBI:67139"/>
        <dbReference type="EC" id="1.17.1.8"/>
    </reaction>
</comment>
<comment type="pathway">
    <text evidence="1">Amino-acid biosynthesis; L-lysine biosynthesis via DAP pathway; (S)-tetrahydrodipicolinate from L-aspartate: step 4/4.</text>
</comment>
<comment type="subcellular location">
    <subcellularLocation>
        <location evidence="1">Cytoplasm</location>
    </subcellularLocation>
</comment>
<comment type="similarity">
    <text evidence="1">Belongs to the DapB family.</text>
</comment>
<comment type="caution">
    <text evidence="2">Was originally thought to be a dihydrodipicolinate reductase (DHDPR), catalyzing the conversion of dihydrodipicolinate to tetrahydrodipicolinate. However, it was shown in E.coli that the substrate of the enzymatic reaction is not dihydrodipicolinate (DHDP) but in fact (2S,4S)-4-hydroxy-2,3,4,5-tetrahydrodipicolinic acid (HTPA), the product released by the DapA-catalyzed reaction.</text>
</comment>
<gene>
    <name evidence="1" type="primary">dapB</name>
    <name type="ordered locus">Csal_3087</name>
</gene>
<reference key="1">
    <citation type="journal article" date="2011" name="Stand. Genomic Sci.">
        <title>Complete genome sequence of the halophilic and highly halotolerant Chromohalobacter salexigens type strain (1H11(T)).</title>
        <authorList>
            <person name="Copeland A."/>
            <person name="O'Connor K."/>
            <person name="Lucas S."/>
            <person name="Lapidus A."/>
            <person name="Berry K.W."/>
            <person name="Detter J.C."/>
            <person name="Del Rio T.G."/>
            <person name="Hammon N."/>
            <person name="Dalin E."/>
            <person name="Tice H."/>
            <person name="Pitluck S."/>
            <person name="Bruce D."/>
            <person name="Goodwin L."/>
            <person name="Han C."/>
            <person name="Tapia R."/>
            <person name="Saunders E."/>
            <person name="Schmutz J."/>
            <person name="Brettin T."/>
            <person name="Larimer F."/>
            <person name="Land M."/>
            <person name="Hauser L."/>
            <person name="Vargas C."/>
            <person name="Nieto J.J."/>
            <person name="Kyrpides N.C."/>
            <person name="Ivanova N."/>
            <person name="Goker M."/>
            <person name="Klenk H.P."/>
            <person name="Csonka L.N."/>
            <person name="Woyke T."/>
        </authorList>
    </citation>
    <scope>NUCLEOTIDE SEQUENCE [LARGE SCALE GENOMIC DNA]</scope>
    <source>
        <strain>ATCC BAA-138 / DSM 3043 / CIP 106854 / NCIMB 13768 / 1H11</strain>
    </source>
</reference>
<protein>
    <recommendedName>
        <fullName evidence="1">4-hydroxy-tetrahydrodipicolinate reductase</fullName>
        <shortName evidence="1">HTPA reductase</shortName>
        <ecNumber evidence="1">1.17.1.8</ecNumber>
    </recommendedName>
</protein>
<dbReference type="EC" id="1.17.1.8" evidence="1"/>
<dbReference type="EMBL" id="CP000285">
    <property type="protein sequence ID" value="ABE60431.1"/>
    <property type="molecule type" value="Genomic_DNA"/>
</dbReference>
<dbReference type="RefSeq" id="WP_011508377.1">
    <property type="nucleotide sequence ID" value="NC_007963.1"/>
</dbReference>
<dbReference type="SMR" id="Q1QSX7"/>
<dbReference type="STRING" id="290398.Csal_3087"/>
<dbReference type="GeneID" id="95335783"/>
<dbReference type="KEGG" id="csa:Csal_3087"/>
<dbReference type="eggNOG" id="COG0289">
    <property type="taxonomic scope" value="Bacteria"/>
</dbReference>
<dbReference type="HOGENOM" id="CLU_047479_2_1_6"/>
<dbReference type="OrthoDB" id="9790352at2"/>
<dbReference type="UniPathway" id="UPA00034">
    <property type="reaction ID" value="UER00018"/>
</dbReference>
<dbReference type="Proteomes" id="UP000000239">
    <property type="component" value="Chromosome"/>
</dbReference>
<dbReference type="GO" id="GO:0005829">
    <property type="term" value="C:cytosol"/>
    <property type="evidence" value="ECO:0007669"/>
    <property type="project" value="TreeGrafter"/>
</dbReference>
<dbReference type="GO" id="GO:0008839">
    <property type="term" value="F:4-hydroxy-tetrahydrodipicolinate reductase"/>
    <property type="evidence" value="ECO:0007669"/>
    <property type="project" value="UniProtKB-EC"/>
</dbReference>
<dbReference type="GO" id="GO:0051287">
    <property type="term" value="F:NAD binding"/>
    <property type="evidence" value="ECO:0007669"/>
    <property type="project" value="UniProtKB-UniRule"/>
</dbReference>
<dbReference type="GO" id="GO:0050661">
    <property type="term" value="F:NADP binding"/>
    <property type="evidence" value="ECO:0007669"/>
    <property type="project" value="UniProtKB-UniRule"/>
</dbReference>
<dbReference type="GO" id="GO:0016726">
    <property type="term" value="F:oxidoreductase activity, acting on CH or CH2 groups, NAD or NADP as acceptor"/>
    <property type="evidence" value="ECO:0007669"/>
    <property type="project" value="UniProtKB-UniRule"/>
</dbReference>
<dbReference type="GO" id="GO:0019877">
    <property type="term" value="P:diaminopimelate biosynthetic process"/>
    <property type="evidence" value="ECO:0007669"/>
    <property type="project" value="UniProtKB-UniRule"/>
</dbReference>
<dbReference type="GO" id="GO:0009089">
    <property type="term" value="P:lysine biosynthetic process via diaminopimelate"/>
    <property type="evidence" value="ECO:0007669"/>
    <property type="project" value="UniProtKB-UniRule"/>
</dbReference>
<dbReference type="CDD" id="cd02274">
    <property type="entry name" value="DHDPR_N"/>
    <property type="match status" value="1"/>
</dbReference>
<dbReference type="FunFam" id="3.30.360.10:FF:000004">
    <property type="entry name" value="4-hydroxy-tetrahydrodipicolinate reductase"/>
    <property type="match status" value="1"/>
</dbReference>
<dbReference type="FunFam" id="3.40.50.720:FF:000048">
    <property type="entry name" value="4-hydroxy-tetrahydrodipicolinate reductase"/>
    <property type="match status" value="1"/>
</dbReference>
<dbReference type="Gene3D" id="3.30.360.10">
    <property type="entry name" value="Dihydrodipicolinate Reductase, domain 2"/>
    <property type="match status" value="1"/>
</dbReference>
<dbReference type="Gene3D" id="3.40.50.720">
    <property type="entry name" value="NAD(P)-binding Rossmann-like Domain"/>
    <property type="match status" value="1"/>
</dbReference>
<dbReference type="HAMAP" id="MF_00102">
    <property type="entry name" value="DapB"/>
    <property type="match status" value="1"/>
</dbReference>
<dbReference type="InterPro" id="IPR022663">
    <property type="entry name" value="DapB_C"/>
</dbReference>
<dbReference type="InterPro" id="IPR000846">
    <property type="entry name" value="DapB_N"/>
</dbReference>
<dbReference type="InterPro" id="IPR022664">
    <property type="entry name" value="DapB_N_CS"/>
</dbReference>
<dbReference type="InterPro" id="IPR023940">
    <property type="entry name" value="DHDPR_bac"/>
</dbReference>
<dbReference type="InterPro" id="IPR036291">
    <property type="entry name" value="NAD(P)-bd_dom_sf"/>
</dbReference>
<dbReference type="NCBIfam" id="TIGR00036">
    <property type="entry name" value="dapB"/>
    <property type="match status" value="1"/>
</dbReference>
<dbReference type="PANTHER" id="PTHR20836:SF0">
    <property type="entry name" value="4-HYDROXY-TETRAHYDRODIPICOLINATE REDUCTASE 1, CHLOROPLASTIC-RELATED"/>
    <property type="match status" value="1"/>
</dbReference>
<dbReference type="PANTHER" id="PTHR20836">
    <property type="entry name" value="DIHYDRODIPICOLINATE REDUCTASE"/>
    <property type="match status" value="1"/>
</dbReference>
<dbReference type="Pfam" id="PF05173">
    <property type="entry name" value="DapB_C"/>
    <property type="match status" value="1"/>
</dbReference>
<dbReference type="Pfam" id="PF01113">
    <property type="entry name" value="DapB_N"/>
    <property type="match status" value="1"/>
</dbReference>
<dbReference type="PIRSF" id="PIRSF000161">
    <property type="entry name" value="DHPR"/>
    <property type="match status" value="1"/>
</dbReference>
<dbReference type="SUPFAM" id="SSF55347">
    <property type="entry name" value="Glyceraldehyde-3-phosphate dehydrogenase-like, C-terminal domain"/>
    <property type="match status" value="1"/>
</dbReference>
<dbReference type="SUPFAM" id="SSF51735">
    <property type="entry name" value="NAD(P)-binding Rossmann-fold domains"/>
    <property type="match status" value="1"/>
</dbReference>
<dbReference type="PROSITE" id="PS01298">
    <property type="entry name" value="DAPB"/>
    <property type="match status" value="1"/>
</dbReference>
<sequence length="269" mass="28239">MTRIAIVGVAGRMGRTLVNAVQQDPEASLGGGIVEPGSSLVGADLGELAGVGRLGVNATDDPAAIADAFDVLIDFTAPRVTLANLAFCAEHGKAIVIGTTGLSDDELAELDGYRERVPMVFAPNMSVGVNLTLKLLETAARALGDEGYDIEVSEAHHRHKVDAPSGTALKMGEVVAKALSRDLKEDGVFERVGQCGPRGDKEIGFATVRAGDIVGEHTVMFATEGERIEITHKASSRMTFAKGAVRAARWVASRGNGRYDMQDVLGLKG</sequence>
<organism>
    <name type="scientific">Chromohalobacter salexigens (strain ATCC BAA-138 / DSM 3043 / CIP 106854 / NCIMB 13768 / 1H11)</name>
    <dbReference type="NCBI Taxonomy" id="290398"/>
    <lineage>
        <taxon>Bacteria</taxon>
        <taxon>Pseudomonadati</taxon>
        <taxon>Pseudomonadota</taxon>
        <taxon>Gammaproteobacteria</taxon>
        <taxon>Oceanospirillales</taxon>
        <taxon>Halomonadaceae</taxon>
        <taxon>Chromohalobacter</taxon>
    </lineage>
</organism>
<keyword id="KW-0028">Amino-acid biosynthesis</keyword>
<keyword id="KW-0963">Cytoplasm</keyword>
<keyword id="KW-0220">Diaminopimelate biosynthesis</keyword>
<keyword id="KW-0457">Lysine biosynthesis</keyword>
<keyword id="KW-0520">NAD</keyword>
<keyword id="KW-0521">NADP</keyword>
<keyword id="KW-0560">Oxidoreductase</keyword>
<keyword id="KW-1185">Reference proteome</keyword>
<accession>Q1QSX7</accession>
<feature type="chain" id="PRO_1000057681" description="4-hydroxy-tetrahydrodipicolinate reductase">
    <location>
        <begin position="1"/>
        <end position="269"/>
    </location>
</feature>
<feature type="active site" description="Proton donor/acceptor" evidence="1">
    <location>
        <position position="156"/>
    </location>
</feature>
<feature type="active site" description="Proton donor" evidence="1">
    <location>
        <position position="160"/>
    </location>
</feature>
<feature type="binding site" evidence="1">
    <location>
        <begin position="8"/>
        <end position="13"/>
    </location>
    <ligand>
        <name>NAD(+)</name>
        <dbReference type="ChEBI" id="CHEBI:57540"/>
    </ligand>
</feature>
<feature type="binding site" evidence="1">
    <location>
        <begin position="98"/>
        <end position="100"/>
    </location>
    <ligand>
        <name>NAD(+)</name>
        <dbReference type="ChEBI" id="CHEBI:57540"/>
    </ligand>
</feature>
<feature type="binding site" evidence="1">
    <location>
        <begin position="122"/>
        <end position="125"/>
    </location>
    <ligand>
        <name>NAD(+)</name>
        <dbReference type="ChEBI" id="CHEBI:57540"/>
    </ligand>
</feature>
<feature type="binding site" evidence="1">
    <location>
        <position position="157"/>
    </location>
    <ligand>
        <name>(S)-2,3,4,5-tetrahydrodipicolinate</name>
        <dbReference type="ChEBI" id="CHEBI:16845"/>
    </ligand>
</feature>
<feature type="binding site" evidence="1">
    <location>
        <begin position="166"/>
        <end position="167"/>
    </location>
    <ligand>
        <name>(S)-2,3,4,5-tetrahydrodipicolinate</name>
        <dbReference type="ChEBI" id="CHEBI:16845"/>
    </ligand>
</feature>
<proteinExistence type="inferred from homology"/>
<name>DAPB_CHRSD</name>
<evidence type="ECO:0000255" key="1">
    <source>
        <dbReference type="HAMAP-Rule" id="MF_00102"/>
    </source>
</evidence>
<evidence type="ECO:0000305" key="2"/>